<organismHost>
    <name type="scientific">Aedes vexans</name>
    <name type="common">Inland floodwater mosquito</name>
    <name type="synonym">Culex vexans</name>
    <dbReference type="NCBI Taxonomy" id="7163"/>
</organismHost>
<organismHost>
    <name type="scientific">Culex territans</name>
    <dbReference type="NCBI Taxonomy" id="42431"/>
</organismHost>
<organismHost>
    <name type="scientific">Culiseta annulata</name>
    <dbReference type="NCBI Taxonomy" id="332058"/>
</organismHost>
<organismHost>
    <name type="scientific">Ochlerotatus sollicitans</name>
    <name type="common">eastern saltmarsh mosquito</name>
    <dbReference type="NCBI Taxonomy" id="310513"/>
</organismHost>
<organismHost>
    <name type="scientific">Ochlerotatus taeniorhynchus</name>
    <name type="common">Black salt marsh mosquito</name>
    <name type="synonym">Aedes taeniorhynchus</name>
    <dbReference type="NCBI Taxonomy" id="329105"/>
</organismHost>
<organismHost>
    <name type="scientific">Psorophora ferox</name>
    <dbReference type="NCBI Taxonomy" id="7183"/>
</organismHost>
<proteinExistence type="inferred from homology"/>
<sequence length="520" mass="60596">MKEQEIIAELSHSYFNHILREVRPFLEYFNDDFLDSSLTAPIDSELLERLFFMAAITSLDVSLPFNFSDSDVVKSHRKHRWLTSVQSFGSKSKQGIVGKSRLFNAFTVVVKRAKNSKFDEITMRDFCVGINLNKILRQAPFFVRTLGGFQHKNQFNIVTEFVDGRTLKTFLQSKRSSWMDFLNIFFQILLGLEIAQNRLNFSHYDLHTDNIILVPVERSFTVSLYGSNYTVKHDYRPVMIDFGLSSVHTKGKTLGQTNLENKGIFGHMSPGYDIYVFLLFCIDVVQSTNLSIYKGITDLLGFFNSKTNISMDLLTNNHIQSLEKGVSNLVPYQFISYIRDKFSPYLNVDIGPQKMSIDRCLGQKPMFLRLKHLLDRDDELEPLNSPLLKKGFVKTLVNNIKVYYWYREKMVLESDQTAQLIETDKEILDNLIDDLELKIVRKGSDKPQITVEQKNLFFMALEYYNFIRELRLEESSEFYKTWSKRFKKTWVCRNIFSQLDCVIREERLTKCPTAGATLEK</sequence>
<organism>
    <name type="scientific">Invertebrate iridescent virus 3</name>
    <name type="common">IIV-3</name>
    <name type="synonym">Mosquito iridescent virus</name>
    <dbReference type="NCBI Taxonomy" id="345201"/>
    <lineage>
        <taxon>Viruses</taxon>
        <taxon>Varidnaviria</taxon>
        <taxon>Bamfordvirae</taxon>
        <taxon>Nucleocytoviricota</taxon>
        <taxon>Megaviricetes</taxon>
        <taxon>Pimascovirales</taxon>
        <taxon>Iridoviridae</taxon>
        <taxon>Betairidovirinae</taxon>
        <taxon>Chloriridovirus</taxon>
    </lineage>
</organism>
<accession>Q196W2</accession>
<comment type="function">
    <text>Probable kinase.</text>
</comment>
<comment type="similarity">
    <text evidence="3">Belongs to the protein kinase superfamily.</text>
</comment>
<reference key="1">
    <citation type="journal article" date="2006" name="J. Virol.">
        <title>Genome of invertebrate iridescent virus type 3 (mosquito iridescent virus).</title>
        <authorList>
            <person name="Delhon G."/>
            <person name="Tulman E.R."/>
            <person name="Afonso C.L."/>
            <person name="Lu Z."/>
            <person name="Becnel J.J."/>
            <person name="Moser B.A."/>
            <person name="Kutish G.F."/>
            <person name="Rock D.L."/>
        </authorList>
    </citation>
    <scope>NUCLEOTIDE SEQUENCE [LARGE SCALE GENOMIC DNA]</scope>
</reference>
<feature type="chain" id="PRO_0000377506" description="Probable kinase 098L">
    <location>
        <begin position="1"/>
        <end position="520"/>
    </location>
</feature>
<feature type="domain" description="Protein kinase" evidence="2">
    <location>
        <begin position="82"/>
        <end position="393"/>
    </location>
</feature>
<feature type="coiled-coil region" evidence="1">
    <location>
        <begin position="416"/>
        <end position="442"/>
    </location>
</feature>
<feature type="active site" description="Proton acceptor" evidence="2">
    <location>
        <position position="205"/>
    </location>
</feature>
<feature type="binding site" evidence="2">
    <location>
        <begin position="88"/>
        <end position="96"/>
    </location>
    <ligand>
        <name>ATP</name>
        <dbReference type="ChEBI" id="CHEBI:30616"/>
    </ligand>
</feature>
<feature type="binding site" evidence="2">
    <location>
        <position position="111"/>
    </location>
    <ligand>
        <name>ATP</name>
        <dbReference type="ChEBI" id="CHEBI:30616"/>
    </ligand>
</feature>
<keyword id="KW-0067">ATP-binding</keyword>
<keyword id="KW-0175">Coiled coil</keyword>
<keyword id="KW-0418">Kinase</keyword>
<keyword id="KW-0547">Nucleotide-binding</keyword>
<keyword id="KW-1185">Reference proteome</keyword>
<keyword id="KW-0808">Transferase</keyword>
<evidence type="ECO:0000255" key="1"/>
<evidence type="ECO:0000255" key="2">
    <source>
        <dbReference type="PROSITE-ProRule" id="PRU00159"/>
    </source>
</evidence>
<evidence type="ECO:0000305" key="3"/>
<protein>
    <recommendedName>
        <fullName>Probable kinase 098L</fullName>
        <ecNumber>2.7.-.-</ecNumber>
    </recommendedName>
</protein>
<dbReference type="EC" id="2.7.-.-"/>
<dbReference type="EMBL" id="DQ643392">
    <property type="protein sequence ID" value="ABF82128.1"/>
    <property type="molecule type" value="Genomic_DNA"/>
</dbReference>
<dbReference type="RefSeq" id="YP_654670.1">
    <property type="nucleotide sequence ID" value="NC_008187.1"/>
</dbReference>
<dbReference type="KEGG" id="vg:4156242"/>
<dbReference type="OrthoDB" id="5288at10239"/>
<dbReference type="Proteomes" id="UP000001358">
    <property type="component" value="Genome"/>
</dbReference>
<dbReference type="GO" id="GO:0005524">
    <property type="term" value="F:ATP binding"/>
    <property type="evidence" value="ECO:0007669"/>
    <property type="project" value="UniProtKB-KW"/>
</dbReference>
<dbReference type="GO" id="GO:0072354">
    <property type="term" value="F:histone H3T3 kinase activity"/>
    <property type="evidence" value="ECO:0007669"/>
    <property type="project" value="TreeGrafter"/>
</dbReference>
<dbReference type="GO" id="GO:0035556">
    <property type="term" value="P:intracellular signal transduction"/>
    <property type="evidence" value="ECO:0007669"/>
    <property type="project" value="TreeGrafter"/>
</dbReference>
<dbReference type="Gene3D" id="1.10.510.10">
    <property type="entry name" value="Transferase(Phosphotransferase) domain 1"/>
    <property type="match status" value="1"/>
</dbReference>
<dbReference type="InterPro" id="IPR011009">
    <property type="entry name" value="Kinase-like_dom_sf"/>
</dbReference>
<dbReference type="InterPro" id="IPR000719">
    <property type="entry name" value="Prot_kinase_dom"/>
</dbReference>
<dbReference type="PANTHER" id="PTHR24419">
    <property type="entry name" value="INTERLEUKIN-1 RECEPTOR-ASSOCIATED KINASE"/>
    <property type="match status" value="1"/>
</dbReference>
<dbReference type="PANTHER" id="PTHR24419:SF18">
    <property type="entry name" value="SERINE_THREONINE-PROTEIN KINASE HASPIN"/>
    <property type="match status" value="1"/>
</dbReference>
<dbReference type="Pfam" id="PF12330">
    <property type="entry name" value="Haspin_kinase"/>
    <property type="match status" value="1"/>
</dbReference>
<dbReference type="SMART" id="SM00220">
    <property type="entry name" value="S_TKc"/>
    <property type="match status" value="1"/>
</dbReference>
<dbReference type="SUPFAM" id="SSF56112">
    <property type="entry name" value="Protein kinase-like (PK-like)"/>
    <property type="match status" value="1"/>
</dbReference>
<dbReference type="PROSITE" id="PS50011">
    <property type="entry name" value="PROTEIN_KINASE_DOM"/>
    <property type="match status" value="1"/>
</dbReference>
<name>VF439_IIV3</name>
<gene>
    <name type="ORF">IIV3-098L</name>
</gene>